<accession>Q9D2F7</accession>
<evidence type="ECO:0000255" key="1"/>
<evidence type="ECO:0000269" key="2">
    <source>
    </source>
</evidence>
<evidence type="ECO:0000305" key="3"/>
<evidence type="ECO:0000305" key="4">
    <source>
    </source>
</evidence>
<dbReference type="EMBL" id="AC121963">
    <property type="status" value="NOT_ANNOTATED_CDS"/>
    <property type="molecule type" value="Genomic_DNA"/>
</dbReference>
<dbReference type="EMBL" id="AC145082">
    <property type="status" value="NOT_ANNOTATED_CDS"/>
    <property type="molecule type" value="Genomic_DNA"/>
</dbReference>
<dbReference type="EMBL" id="AK019752">
    <property type="protein sequence ID" value="BAB31846.1"/>
    <property type="status" value="ALT_FRAME"/>
    <property type="molecule type" value="mRNA"/>
</dbReference>
<dbReference type="CCDS" id="CCDS50969.1"/>
<dbReference type="RefSeq" id="NP_084213.1">
    <property type="nucleotide sequence ID" value="NM_029937.2"/>
</dbReference>
<dbReference type="SMR" id="Q9D2F7"/>
<dbReference type="FunCoup" id="Q9D2F7">
    <property type="interactions" value="161"/>
</dbReference>
<dbReference type="STRING" id="10090.ENSMUSP00000029548"/>
<dbReference type="GlyCosmos" id="Q9D2F7">
    <property type="glycosylation" value="4 sites, No reported glycans"/>
</dbReference>
<dbReference type="GlyGen" id="Q9D2F7">
    <property type="glycosylation" value="5 sites"/>
</dbReference>
<dbReference type="iPTMnet" id="Q9D2F7"/>
<dbReference type="PhosphoSitePlus" id="Q9D2F7"/>
<dbReference type="PaxDb" id="10090-ENSMUSP00000029548"/>
<dbReference type="PeptideAtlas" id="Q9D2F7"/>
<dbReference type="ProteomicsDB" id="294415"/>
<dbReference type="Antibodypedia" id="77096">
    <property type="antibodies" value="33 antibodies from 14 providers"/>
</dbReference>
<dbReference type="Ensembl" id="ENSMUST00000029548.9">
    <property type="protein sequence ID" value="ENSMUSP00000029548.5"/>
    <property type="gene ID" value="ENSMUSG00000027939.12"/>
</dbReference>
<dbReference type="GeneID" id="77595"/>
<dbReference type="KEGG" id="mmu:77595"/>
<dbReference type="UCSC" id="uc012css.1">
    <property type="organism name" value="mouse"/>
</dbReference>
<dbReference type="AGR" id="MGI:1924845"/>
<dbReference type="CTD" id="91181"/>
<dbReference type="MGI" id="MGI:1924845">
    <property type="gene designation" value="Nup210l"/>
</dbReference>
<dbReference type="VEuPathDB" id="HostDB:ENSMUSG00000027939"/>
<dbReference type="eggNOG" id="KOG1833">
    <property type="taxonomic scope" value="Eukaryota"/>
</dbReference>
<dbReference type="GeneTree" id="ENSGT00390000009491"/>
<dbReference type="HOGENOM" id="CLU_001205_1_1_1"/>
<dbReference type="InParanoid" id="Q9D2F7"/>
<dbReference type="OMA" id="WYSTRHD"/>
<dbReference type="OrthoDB" id="361283at2759"/>
<dbReference type="PhylomeDB" id="Q9D2F7"/>
<dbReference type="TreeFam" id="TF313331"/>
<dbReference type="BioGRID-ORCS" id="77595">
    <property type="hits" value="2 hits in 79 CRISPR screens"/>
</dbReference>
<dbReference type="ChiTaRS" id="Nup210l">
    <property type="organism name" value="mouse"/>
</dbReference>
<dbReference type="PRO" id="PR:Q9D2F7"/>
<dbReference type="Proteomes" id="UP000000589">
    <property type="component" value="Chromosome 3"/>
</dbReference>
<dbReference type="RNAct" id="Q9D2F7">
    <property type="molecule type" value="protein"/>
</dbReference>
<dbReference type="Bgee" id="ENSMUSG00000027939">
    <property type="expression patterns" value="Expressed in spermatocyte and 19 other cell types or tissues"/>
</dbReference>
<dbReference type="ExpressionAtlas" id="Q9D2F7">
    <property type="expression patterns" value="baseline and differential"/>
</dbReference>
<dbReference type="GO" id="GO:0016020">
    <property type="term" value="C:membrane"/>
    <property type="evidence" value="ECO:0007669"/>
    <property type="project" value="UniProtKB-SubCell"/>
</dbReference>
<dbReference type="GO" id="GO:0060009">
    <property type="term" value="P:Sertoli cell development"/>
    <property type="evidence" value="ECO:0000315"/>
    <property type="project" value="MGI"/>
</dbReference>
<dbReference type="GO" id="GO:0007286">
    <property type="term" value="P:spermatid development"/>
    <property type="evidence" value="ECO:0000315"/>
    <property type="project" value="MGI"/>
</dbReference>
<dbReference type="Gene3D" id="2.60.40.1080">
    <property type="match status" value="1"/>
</dbReference>
<dbReference type="InterPro" id="IPR003343">
    <property type="entry name" value="Big_2"/>
</dbReference>
<dbReference type="InterPro" id="IPR056897">
    <property type="entry name" value="Ig_NUP210_4th"/>
</dbReference>
<dbReference type="InterPro" id="IPR056898">
    <property type="entry name" value="Ig_NUP210_6th"/>
</dbReference>
<dbReference type="InterPro" id="IPR056899">
    <property type="entry name" value="Ig_NUP210_9th"/>
</dbReference>
<dbReference type="InterPro" id="IPR008964">
    <property type="entry name" value="Invasin/intimin_cell_adhesion"/>
</dbReference>
<dbReference type="InterPro" id="IPR045197">
    <property type="entry name" value="NUP210-like"/>
</dbReference>
<dbReference type="InterPro" id="IPR055096">
    <property type="entry name" value="NUP210_Ig1"/>
</dbReference>
<dbReference type="InterPro" id="IPR055094">
    <property type="entry name" value="NUP210_Ig15"/>
</dbReference>
<dbReference type="InterPro" id="IPR055097">
    <property type="entry name" value="NUP210_Ig2"/>
</dbReference>
<dbReference type="InterPro" id="IPR055098">
    <property type="entry name" value="NUP210_Ig3"/>
</dbReference>
<dbReference type="InterPro" id="IPR055099">
    <property type="entry name" value="NUP210_Ig7"/>
</dbReference>
<dbReference type="InterPro" id="IPR055095">
    <property type="entry name" value="NUP210_Ig_C"/>
</dbReference>
<dbReference type="PANTHER" id="PTHR23019:SF1">
    <property type="entry name" value="NUCLEAR PORE MEMBRANE GLYCOPROTEIN 210-LIKE"/>
    <property type="match status" value="1"/>
</dbReference>
<dbReference type="PANTHER" id="PTHR23019">
    <property type="entry name" value="NUCLEAR PORE MEMBRANE GLYCOPROTEIN GP210-RELATED"/>
    <property type="match status" value="1"/>
</dbReference>
<dbReference type="Pfam" id="PF02368">
    <property type="entry name" value="Big_2"/>
    <property type="match status" value="1"/>
</dbReference>
<dbReference type="Pfam" id="PF22959">
    <property type="entry name" value="Ig_NUP210_15th"/>
    <property type="match status" value="1"/>
</dbReference>
<dbReference type="Pfam" id="PF25354">
    <property type="entry name" value="Ig_NUP210_16th"/>
    <property type="match status" value="1"/>
</dbReference>
<dbReference type="Pfam" id="PF22967">
    <property type="entry name" value="Ig_NUP210_1st"/>
    <property type="match status" value="1"/>
</dbReference>
<dbReference type="Pfam" id="PF22969">
    <property type="entry name" value="Ig_NUP210_2nd"/>
    <property type="match status" value="1"/>
</dbReference>
<dbReference type="Pfam" id="PF22963">
    <property type="entry name" value="Ig_NUP210_3rd"/>
    <property type="match status" value="1"/>
</dbReference>
<dbReference type="Pfam" id="PF24991">
    <property type="entry name" value="Ig_NUP210_4th"/>
    <property type="match status" value="1"/>
</dbReference>
<dbReference type="Pfam" id="PF24935">
    <property type="entry name" value="Ig_NUP210_6th"/>
    <property type="match status" value="1"/>
</dbReference>
<dbReference type="Pfam" id="PF22962">
    <property type="entry name" value="Ig_NUP210_7th"/>
    <property type="match status" value="1"/>
</dbReference>
<dbReference type="Pfam" id="PF24902">
    <property type="entry name" value="Ig_NUP210_9th"/>
    <property type="match status" value="1"/>
</dbReference>
<dbReference type="Pfam" id="PF22957">
    <property type="entry name" value="NUP210_Ig"/>
    <property type="match status" value="1"/>
</dbReference>
<dbReference type="SMART" id="SM00635">
    <property type="entry name" value="BID_2"/>
    <property type="match status" value="2"/>
</dbReference>
<dbReference type="SUPFAM" id="SSF49373">
    <property type="entry name" value="Invasin/intimin cell-adhesion fragments"/>
    <property type="match status" value="2"/>
</dbReference>
<gene>
    <name type="primary">Nup210l</name>
</gene>
<proteinExistence type="evidence at protein level"/>
<reference key="1">
    <citation type="journal article" date="2009" name="PLoS Biol.">
        <title>Lineage-specific biology revealed by a finished genome assembly of the mouse.</title>
        <authorList>
            <person name="Church D.M."/>
            <person name="Goodstadt L."/>
            <person name="Hillier L.W."/>
            <person name="Zody M.C."/>
            <person name="Goldstein S."/>
            <person name="She X."/>
            <person name="Bult C.J."/>
            <person name="Agarwala R."/>
            <person name="Cherry J.L."/>
            <person name="DiCuccio M."/>
            <person name="Hlavina W."/>
            <person name="Kapustin Y."/>
            <person name="Meric P."/>
            <person name="Maglott D."/>
            <person name="Birtle Z."/>
            <person name="Marques A.C."/>
            <person name="Graves T."/>
            <person name="Zhou S."/>
            <person name="Teague B."/>
            <person name="Potamousis K."/>
            <person name="Churas C."/>
            <person name="Place M."/>
            <person name="Herschleb J."/>
            <person name="Runnheim R."/>
            <person name="Forrest D."/>
            <person name="Amos-Landgraf J."/>
            <person name="Schwartz D.C."/>
            <person name="Cheng Z."/>
            <person name="Lindblad-Toh K."/>
            <person name="Eichler E.E."/>
            <person name="Ponting C.P."/>
        </authorList>
    </citation>
    <scope>NUCLEOTIDE SEQUENCE [LARGE SCALE GENOMIC DNA]</scope>
    <source>
        <strain>C57BL/6J</strain>
    </source>
</reference>
<reference key="2">
    <citation type="journal article" date="2005" name="Science">
        <title>The transcriptional landscape of the mammalian genome.</title>
        <authorList>
            <person name="Carninci P."/>
            <person name="Kasukawa T."/>
            <person name="Katayama S."/>
            <person name="Gough J."/>
            <person name="Frith M.C."/>
            <person name="Maeda N."/>
            <person name="Oyama R."/>
            <person name="Ravasi T."/>
            <person name="Lenhard B."/>
            <person name="Wells C."/>
            <person name="Kodzius R."/>
            <person name="Shimokawa K."/>
            <person name="Bajic V.B."/>
            <person name="Brenner S.E."/>
            <person name="Batalov S."/>
            <person name="Forrest A.R."/>
            <person name="Zavolan M."/>
            <person name="Davis M.J."/>
            <person name="Wilming L.G."/>
            <person name="Aidinis V."/>
            <person name="Allen J.E."/>
            <person name="Ambesi-Impiombato A."/>
            <person name="Apweiler R."/>
            <person name="Aturaliya R.N."/>
            <person name="Bailey T.L."/>
            <person name="Bansal M."/>
            <person name="Baxter L."/>
            <person name="Beisel K.W."/>
            <person name="Bersano T."/>
            <person name="Bono H."/>
            <person name="Chalk A.M."/>
            <person name="Chiu K.P."/>
            <person name="Choudhary V."/>
            <person name="Christoffels A."/>
            <person name="Clutterbuck D.R."/>
            <person name="Crowe M.L."/>
            <person name="Dalla E."/>
            <person name="Dalrymple B.P."/>
            <person name="de Bono B."/>
            <person name="Della Gatta G."/>
            <person name="di Bernardo D."/>
            <person name="Down T."/>
            <person name="Engstrom P."/>
            <person name="Fagiolini M."/>
            <person name="Faulkner G."/>
            <person name="Fletcher C.F."/>
            <person name="Fukushima T."/>
            <person name="Furuno M."/>
            <person name="Futaki S."/>
            <person name="Gariboldi M."/>
            <person name="Georgii-Hemming P."/>
            <person name="Gingeras T.R."/>
            <person name="Gojobori T."/>
            <person name="Green R.E."/>
            <person name="Gustincich S."/>
            <person name="Harbers M."/>
            <person name="Hayashi Y."/>
            <person name="Hensch T.K."/>
            <person name="Hirokawa N."/>
            <person name="Hill D."/>
            <person name="Huminiecki L."/>
            <person name="Iacono M."/>
            <person name="Ikeo K."/>
            <person name="Iwama A."/>
            <person name="Ishikawa T."/>
            <person name="Jakt M."/>
            <person name="Kanapin A."/>
            <person name="Katoh M."/>
            <person name="Kawasawa Y."/>
            <person name="Kelso J."/>
            <person name="Kitamura H."/>
            <person name="Kitano H."/>
            <person name="Kollias G."/>
            <person name="Krishnan S.P."/>
            <person name="Kruger A."/>
            <person name="Kummerfeld S.K."/>
            <person name="Kurochkin I.V."/>
            <person name="Lareau L.F."/>
            <person name="Lazarevic D."/>
            <person name="Lipovich L."/>
            <person name="Liu J."/>
            <person name="Liuni S."/>
            <person name="McWilliam S."/>
            <person name="Madan Babu M."/>
            <person name="Madera M."/>
            <person name="Marchionni L."/>
            <person name="Matsuda H."/>
            <person name="Matsuzawa S."/>
            <person name="Miki H."/>
            <person name="Mignone F."/>
            <person name="Miyake S."/>
            <person name="Morris K."/>
            <person name="Mottagui-Tabar S."/>
            <person name="Mulder N."/>
            <person name="Nakano N."/>
            <person name="Nakauchi H."/>
            <person name="Ng P."/>
            <person name="Nilsson R."/>
            <person name="Nishiguchi S."/>
            <person name="Nishikawa S."/>
            <person name="Nori F."/>
            <person name="Ohara O."/>
            <person name="Okazaki Y."/>
            <person name="Orlando V."/>
            <person name="Pang K.C."/>
            <person name="Pavan W.J."/>
            <person name="Pavesi G."/>
            <person name="Pesole G."/>
            <person name="Petrovsky N."/>
            <person name="Piazza S."/>
            <person name="Reed J."/>
            <person name="Reid J.F."/>
            <person name="Ring B.Z."/>
            <person name="Ringwald M."/>
            <person name="Rost B."/>
            <person name="Ruan Y."/>
            <person name="Salzberg S.L."/>
            <person name="Sandelin A."/>
            <person name="Schneider C."/>
            <person name="Schoenbach C."/>
            <person name="Sekiguchi K."/>
            <person name="Semple C.A."/>
            <person name="Seno S."/>
            <person name="Sessa L."/>
            <person name="Sheng Y."/>
            <person name="Shibata Y."/>
            <person name="Shimada H."/>
            <person name="Shimada K."/>
            <person name="Silva D."/>
            <person name="Sinclair B."/>
            <person name="Sperling S."/>
            <person name="Stupka E."/>
            <person name="Sugiura K."/>
            <person name="Sultana R."/>
            <person name="Takenaka Y."/>
            <person name="Taki K."/>
            <person name="Tammoja K."/>
            <person name="Tan S.L."/>
            <person name="Tang S."/>
            <person name="Taylor M.S."/>
            <person name="Tegner J."/>
            <person name="Teichmann S.A."/>
            <person name="Ueda H.R."/>
            <person name="van Nimwegen E."/>
            <person name="Verardo R."/>
            <person name="Wei C.L."/>
            <person name="Yagi K."/>
            <person name="Yamanishi H."/>
            <person name="Zabarovsky E."/>
            <person name="Zhu S."/>
            <person name="Zimmer A."/>
            <person name="Hide W."/>
            <person name="Bult C."/>
            <person name="Grimmond S.M."/>
            <person name="Teasdale R.D."/>
            <person name="Liu E.T."/>
            <person name="Brusic V."/>
            <person name="Quackenbush J."/>
            <person name="Wahlestedt C."/>
            <person name="Mattick J.S."/>
            <person name="Hume D.A."/>
            <person name="Kai C."/>
            <person name="Sasaki D."/>
            <person name="Tomaru Y."/>
            <person name="Fukuda S."/>
            <person name="Kanamori-Katayama M."/>
            <person name="Suzuki M."/>
            <person name="Aoki J."/>
            <person name="Arakawa T."/>
            <person name="Iida J."/>
            <person name="Imamura K."/>
            <person name="Itoh M."/>
            <person name="Kato T."/>
            <person name="Kawaji H."/>
            <person name="Kawagashira N."/>
            <person name="Kawashima T."/>
            <person name="Kojima M."/>
            <person name="Kondo S."/>
            <person name="Konno H."/>
            <person name="Nakano K."/>
            <person name="Ninomiya N."/>
            <person name="Nishio T."/>
            <person name="Okada M."/>
            <person name="Plessy C."/>
            <person name="Shibata K."/>
            <person name="Shiraki T."/>
            <person name="Suzuki S."/>
            <person name="Tagami M."/>
            <person name="Waki K."/>
            <person name="Watahiki A."/>
            <person name="Okamura-Oho Y."/>
            <person name="Suzuki H."/>
            <person name="Kawai J."/>
            <person name="Hayashizaki Y."/>
        </authorList>
    </citation>
    <scope>NUCLEOTIDE SEQUENCE [LARGE SCALE MRNA] OF 1-867</scope>
    <source>
        <tissue>Testis</tissue>
    </source>
</reference>
<reference key="3">
    <citation type="journal article" date="2010" name="Cell">
        <title>A tissue-specific atlas of mouse protein phosphorylation and expression.</title>
        <authorList>
            <person name="Huttlin E.L."/>
            <person name="Jedrychowski M.P."/>
            <person name="Elias J.E."/>
            <person name="Goswami T."/>
            <person name="Rad R."/>
            <person name="Beausoleil S.A."/>
            <person name="Villen J."/>
            <person name="Haas W."/>
            <person name="Sowa M.E."/>
            <person name="Gygi S.P."/>
        </authorList>
    </citation>
    <scope>IDENTIFICATION BY MASS SPECTROMETRY [LARGE SCALE ANALYSIS]</scope>
    <source>
        <tissue>Testis</tissue>
    </source>
</reference>
<reference key="4">
    <citation type="journal article" date="2024" name="Clin. Genet.">
        <title>Spermatozoa in mice lacking the nucleoporin NUP210L show defects in head shape and motility but not in nuclear compaction or histone replacement.</title>
        <authorList>
            <person name="Al Dala Ali M."/>
            <person name="Longepied G."/>
            <person name="Nicolet A."/>
            <person name="Metzler-Guillemain C."/>
            <person name="Mitchell M.J."/>
        </authorList>
    </citation>
    <scope>DISRUPTION PHENOTYPE</scope>
    <scope>TISSUE SPECIFICITY</scope>
    <scope>SUBCELLULAR LOCATION</scope>
</reference>
<keyword id="KW-0325">Glycoprotein</keyword>
<keyword id="KW-0472">Membrane</keyword>
<keyword id="KW-0539">Nucleus</keyword>
<keyword id="KW-1185">Reference proteome</keyword>
<keyword id="KW-0732">Signal</keyword>
<keyword id="KW-0812">Transmembrane</keyword>
<keyword id="KW-1133">Transmembrane helix</keyword>
<feature type="signal peptide" evidence="1">
    <location>
        <begin position="1"/>
        <end position="32"/>
    </location>
</feature>
<feature type="chain" id="PRO_0000236049" description="Nuclear pore membrane glycoprotein 210-like">
    <location>
        <begin position="33"/>
        <end position="1881"/>
    </location>
</feature>
<feature type="transmembrane region" description="Helical" evidence="1">
    <location>
        <begin position="1804"/>
        <end position="1824"/>
    </location>
</feature>
<feature type="domain" description="BIG2" evidence="1">
    <location>
        <begin position="1078"/>
        <end position="1150"/>
    </location>
</feature>
<feature type="glycosylation site" description="N-linked (GlcNAc...) asparagine" evidence="1">
    <location>
        <position position="80"/>
    </location>
</feature>
<feature type="glycosylation site" description="N-linked (GlcNAc...) asparagine" evidence="1">
    <location>
        <position position="344"/>
    </location>
</feature>
<feature type="glycosylation site" description="N-linked (GlcNAc...) asparagine" evidence="1">
    <location>
        <position position="808"/>
    </location>
</feature>
<feature type="glycosylation site" description="N-linked (GlcNAc...) asparagine" evidence="1">
    <location>
        <position position="1441"/>
    </location>
</feature>
<feature type="sequence conflict" description="In Ref. 2; BAB31846." evidence="3" ref="2">
    <original>K</original>
    <variation>E</variation>
    <location>
        <position position="382"/>
    </location>
</feature>
<feature type="sequence conflict" description="In Ref. 2; BAB31846." evidence="3" ref="2">
    <original>HQILKVHQMKGTVLIGVNF</original>
    <variation>TVNSLQMPQGVTKWFTLLP</variation>
    <location>
        <begin position="849"/>
        <end position="867"/>
    </location>
</feature>
<protein>
    <recommendedName>
        <fullName>Nuclear pore membrane glycoprotein 210-like</fullName>
    </recommendedName>
    <alternativeName>
        <fullName>Nucleoporin 210 kDa-like</fullName>
    </alternativeName>
    <alternativeName>
        <fullName>Nucleoporin Nup210-like</fullName>
    </alternativeName>
</protein>
<sequence>MIAFGAPRRRSFGLLFSLAPHLFFLFLIGTLANKLNVPQVLLPFSREPGRVPFLLEAQRGCYIWHSTHHDAVTIQPLYENGTSCSQRAVLVAESTQPIRLSSIILAREVVTDHELRCDVKVDVIDNIEIVSRTRELYVDDAPLELMVRALDSKGNTFSTLAGMVFEWSIAQDNESSREELSSKIRILKYSEAEYSPPDYIIEMEKQERQGDVILVSGMRTGAAVVKVRIYEPFYKKVAAALIRLLVLENIFLIPSHDTYLLVGAYIKYRVAKMVQGRMTEVNFPLEHYTLELQDHRLTNGGLPSKSVALLDEKTAMVTAVQLGQTNLVFVHKNVHMRSVSGLPNSTIYVVEPGFLGFSIHPGGRWSLEVGQVYVITVEVFDKSSTRVYISDNLKITFQFSKEYFEEQLSTSNGSYHVVKALKDGVVVINATLTSSLQERNSSQPKTYQISHQQEVKIYFPIQLKPSFLAFPHHPLGISNRFTVQVEGGSGNFTWSSSNETVAMVTTKGVVTAGQVRGNSTILARDVQNPSRSGDIKVYVMKLNKMELLPFQADVEIGQIIEVPIAMYHVNTETKEAIAFTDCSHLPLDLNSDKQGVFTLFKEGIQKPGAMHCSSVHIAATSPGHTLVTVSVTGHEEHAWSSATFAAYEPLKALNPVDVALVTWQSVKEMVFEGGPHPWILEPSRFFLELSMEKAEAIRVAEVRLPAKRKQNQYVYRVLCLELGEQVLTFRIGNHPGVLNPSPSVEKVQVRFICAHPASMLVTPMYKAPSGTQPCPLPQYNKQLIPVSSLRDSVLELAVFDQHGRKFDNFSSLMLEWKSSNETLAHFEDSKSVEMVARDDGSGQTRLHGHQILKVHQMKGTVLIGVNFAGYSGKKSPKGISNSPRSAGVELILVEDVTVQPENATIYNHPDVKEIFNLVEGSGYFLINSSEQDIVTITYREAESSVQLVPAHPGFLTLEVYDLCLAYLGPAVAQIRVSDIQELELDLIDKVEIGKTVLVVVRVLGSSKHPFRNKYFRNMEVRLQLASAIVTLRLMEDQDEYSENYMLRAVTVGQTTLVAIATDRMGKKFTSAPRHIEVFPPFRLIPEKMTLIATNMMQIMSEGGPQPQSIIHFSISNQTVAVVNRRGQVTGKSVGTAVLHGTIQTVNEDTGKVIVFSQDEVQIEVVQLQAVRILAAATRLVTATEMPVYVMGVTSTQTPFSFSNASPLLTFHWSMSKRDVLDLVPRHSEVFLQLPAENNFAMVVHTKAAGRTTIKVTVRSENSSSGQLEGNLLELSDEIQILVFEKLQLFYANCQPEQILMPMNSQLKLHTNREGAAFVSSRVLKCFPNSSVIEEDGGGLLRSGSIAGTAVLEVTSIEPFGVNQTTITGVQVAPVTYLRLSSYPKLYTAQGRTLSAFPLGMSLTFIVEFYNNIGEKFHTHNTRLYMALNRDDLLLIGPGNRNYTYMAQAVNKGVTVVGLWDQRHPGMADYIPVAVEHAIEPDTKLIFVGDVICFSTQLVNQHGEPGVWMISTNNIVQTDTATGVGVARNPGTATIFHNIPGVVKTFREVVVNASSRLTLSYDLKTYLTNTPNATAFKLFISTGRNVNLKGSCTPSQALAIEKVLLPETLMLCHVQFSNTLLDIPASKVFHIHSEFSVEKGVYVCLIKVRQESKELRQVLSVADTSVYGWATLVSERGKNGMQRILIPFIPGFYMNQSEFVLGHKDTGELRILGVERVLESLEVFHSSPFLAVSGYKHSMLTTGLTVYLVRIVNFTAFQQMSSPAFINVSCALTNQQEAVIVRAKDASGADHCEDSGVFKNFVGSYQILLFTLFAVLASTSFIFLAHNAFLNKVQTIPVVYVPTTGTTQPGSYTATCSPPHFLSSRPPLVQSRLQHWLWSIKH</sequence>
<organism>
    <name type="scientific">Mus musculus</name>
    <name type="common">Mouse</name>
    <dbReference type="NCBI Taxonomy" id="10090"/>
    <lineage>
        <taxon>Eukaryota</taxon>
        <taxon>Metazoa</taxon>
        <taxon>Chordata</taxon>
        <taxon>Craniata</taxon>
        <taxon>Vertebrata</taxon>
        <taxon>Euteleostomi</taxon>
        <taxon>Mammalia</taxon>
        <taxon>Eutheria</taxon>
        <taxon>Euarchontoglires</taxon>
        <taxon>Glires</taxon>
        <taxon>Rodentia</taxon>
        <taxon>Myomorpha</taxon>
        <taxon>Muroidea</taxon>
        <taxon>Muridae</taxon>
        <taxon>Murinae</taxon>
        <taxon>Mus</taxon>
        <taxon>Mus</taxon>
    </lineage>
</organism>
<comment type="subcellular location">
    <subcellularLocation>
        <location evidence="4">Nucleus membrane</location>
        <topology evidence="3">Single-pass membrane protein</topology>
    </subcellularLocation>
    <subcellularLocation>
        <location evidence="2">Nucleus</location>
        <location evidence="2">Nucleoplasm</location>
    </subcellularLocation>
    <text evidence="2">Shows a diffuse granular nucleoplasmic location in round spermatids that becomes concentrated at the posterior pole in late round and early elongating spermatids and is only detected at the caudal site in most elongating spermatids and spermatozoa (PubMed:38129135). In round spermatids, localization differs between human and mouse; in human, it is restricted to the nuclear periphery except under the acrosome, while in mouse, it is nucleoplasmic (PubMed:38129135).</text>
</comment>
<comment type="tissue specificity">
    <text evidence="2">Expressed in testis.</text>
</comment>
<comment type="disruption phenotype">
    <text evidence="2">Knockout animals do not show any overt phenotype. Males and females are fertile, with no age-dependent decrease in fertility. In males, spermatozoa have a uniform moderately abnormal head morphology, frequent flagellar anomalies and decreased progressive motility. They do not show compromised histone removal or nuclear compaction failure.</text>
</comment>
<comment type="similarity">
    <text evidence="3">Belongs to the NUP210 family.</text>
</comment>
<comment type="sequence caution" evidence="3">
    <conflict type="frameshift">
        <sequence resource="EMBL-CDS" id="BAB31846"/>
    </conflict>
</comment>
<name>P210L_MOUSE</name>